<proteinExistence type="inferred from homology"/>
<evidence type="ECO:0000250" key="1">
    <source>
        <dbReference type="UniProtKB" id="D1L2X1"/>
    </source>
</evidence>
<evidence type="ECO:0000269" key="2">
    <source>
    </source>
</evidence>
<evidence type="ECO:0000303" key="3">
    <source>
    </source>
</evidence>
<evidence type="ECO:0000305" key="4"/>
<feature type="chain" id="PRO_0000458712" description="Depolymerase 2, capsule K56-specific">
    <location>
        <begin position="1"/>
        <end position="678"/>
    </location>
</feature>
<protein>
    <recommendedName>
        <fullName evidence="4">Depolymerase 2, capsule K56-specific</fullName>
    </recommendedName>
    <alternativeName>
        <fullName evidence="3">K56dep</fullName>
    </alternativeName>
    <alternativeName>
        <fullName evidence="4">Probable tail spike protein</fullName>
    </alternativeName>
</protein>
<reference key="1">
    <citation type="journal article" date="2019" name="Microb. Biotechnol.">
        <title>Identification of three podoviruses infecting Klebsiella encoding capsule depolymerases that digest specific capsular types.</title>
        <authorList>
            <person name="Pan Y.J."/>
            <person name="Lin T.L."/>
            <person name="Chen Y.Y."/>
            <person name="Lai P.H."/>
            <person name="Tsai Y.T."/>
            <person name="Hsu C.R."/>
            <person name="Hsieh P.F."/>
            <person name="Lin Y.T."/>
            <person name="Wang J.T."/>
        </authorList>
    </citation>
    <scope>NUCLEOTIDE SEQUENCE [LARGE SCALE GENOMIC DNA]</scope>
    <scope>FUNCTION</scope>
</reference>
<reference key="2">
    <citation type="journal article" date="2019" name="Front. Microbiol.">
        <title>Modeling the Architecture of Depolymerase-Containing Receptor Binding Proteins in Klebsiella Phages.</title>
        <authorList>
            <person name="Latka A."/>
            <person name="Leiman P.G."/>
            <person name="Drulis-Kawa Z."/>
            <person name="Briers Y."/>
        </authorList>
    </citation>
    <scope>REVIEW</scope>
</reference>
<organismHost>
    <name type="scientific">Klebsiella pneumoniae</name>
    <dbReference type="NCBI Taxonomy" id="573"/>
</organismHost>
<dbReference type="EMBL" id="LC413194">
    <property type="protein sequence ID" value="BBF66868.1"/>
    <property type="molecule type" value="Genomic_DNA"/>
</dbReference>
<dbReference type="RefSeq" id="YP_009818027.1">
    <property type="nucleotide sequence ID" value="NC_048131.1"/>
</dbReference>
<dbReference type="GeneID" id="55009362"/>
<dbReference type="Proteomes" id="UP000279551">
    <property type="component" value="Genome"/>
</dbReference>
<dbReference type="GO" id="GO:0098015">
    <property type="term" value="C:virus tail"/>
    <property type="evidence" value="ECO:0007669"/>
    <property type="project" value="UniProtKB-KW"/>
</dbReference>
<dbReference type="GO" id="GO:0098671">
    <property type="term" value="P:adhesion receptor-mediated virion attachment to host cell"/>
    <property type="evidence" value="ECO:0007669"/>
    <property type="project" value="UniProtKB-KW"/>
</dbReference>
<dbReference type="GO" id="GO:0098994">
    <property type="term" value="P:symbiont entry into host cell via disruption of host cell envelope"/>
    <property type="evidence" value="ECO:0007669"/>
    <property type="project" value="UniProtKB-KW"/>
</dbReference>
<dbReference type="GO" id="GO:0098996">
    <property type="term" value="P:symbiont entry into host cell via disruption of host cell glycocalyx"/>
    <property type="evidence" value="ECO:0000314"/>
    <property type="project" value="UniProtKB"/>
</dbReference>
<sequence>MLKTDFNQPKGSTIGVLRDGRTIQQTFDKMRYADTIQELRTMEPVGPRDVATVRRATEDSVLVNAPVYYDKNDTTSPDDGISVFVTAGGARWKFNTFKGYCAGLAGLKEDGSNVTTVVNGIVNRIVAKMVAAGRVNNQQRTVNIPVTGDAPEWKLTGPLVWPTVISLVFHGSVLLDGTSLTAGKILNCNNVPFMDRLTVAIMAAGTNPTDRPGRVNQAVGRAALTCIGGEVTVRLPGTQMDGSNNPTIHTVGAMIGNDAACLLDARDIYFEKFNIIGAKTGIEFGCYNTFMCGVEHFNVSRCYDGFSSPTLGSNYGERMYLRNGTIGNMDRHGAYLVGGGDFTLENVSVDFLGGDLAHFGPLSPAEYKHLSGHIEGVKGSLAAKEMPASYSKALVILGKAVRRDDRVVDQNDYRGVRQLFACPQNPYGRMLKVINESYAPGREGQVPNNPYPCETGWPGNSGVELILPKDTFVDTPYVNSYSPAVRNSVNQTISFTTASTGPLGGNVLSTDYAFAAEIIGGATCSYGTPAEATSDGYMPFIITLSDPSDVVYLFCTNRFRPGSGQSVLWGNCSVTLVGTTGSIILAPVIASYLGTTWTANTTTGAVTATPIRRGIQEGGTVDMSALAAAGGIPNGTYQAMPSRSVQGFYLGCDHAVAGFKITGGTGQVRLKLPVWWFR</sequence>
<name>DPOL2_BPK31</name>
<comment type="function">
    <text evidence="2">Functions as a receptor binding protein (RBP) and probably mediates the attachment to the host capsular exopolysaccharides (PubMed:30706654). Displays a depolymerase activity that specifically degrades the K56-type polysaccharides of Klebsiella pneumoniae capsule, which allows the phage to reach the host cell membrane and bind the entry receptor (PubMed:30706654).</text>
</comment>
<comment type="subunit">
    <text evidence="1">Homotrimer. Interacts (via N-terminus) with depolymerase 1 (via N-terminus); this interaction probably gives rise to a branched tailspike.</text>
</comment>
<comment type="subcellular location">
    <subcellularLocation>
        <location evidence="4">Virion</location>
    </subcellularLocation>
    <text evidence="1 4">Tail appendage (Probable). Depolymerase 1 is connected to the phage tail via an N-terminal anchor domain, while depolymerase 2 is attached to depolymerase 1 (By similarity).</text>
</comment>
<comment type="similarity">
    <text evidence="4">In the N-terminal section; belongs to the Przondovirus depolymerase 2 family.</text>
</comment>
<organism>
    <name type="scientific">Klebsiella phage KN3-1</name>
    <name type="common">Bacteriophage KN3-1</name>
    <dbReference type="NCBI Taxonomy" id="2282630"/>
    <lineage>
        <taxon>Viruses</taxon>
        <taxon>Duplodnaviria</taxon>
        <taxon>Heunggongvirae</taxon>
        <taxon>Uroviricota</taxon>
        <taxon>Caudoviricetes</taxon>
        <taxon>Autographiviridae</taxon>
        <taxon>Studiervirinae</taxon>
        <taxon>Przondovirus</taxon>
        <taxon>Przondovirus KN31</taxon>
    </lineage>
</organism>
<accession>A0A3T0ZBX8</accession>
<keyword id="KW-1238">Degradation of host capsule during virus entry</keyword>
<keyword id="KW-1235">Degradation of host cell envelope components during virus entry</keyword>
<keyword id="KW-0945">Host-virus interaction</keyword>
<keyword id="KW-1185">Reference proteome</keyword>
<keyword id="KW-1233">Viral attachment to host adhesion receptor</keyword>
<keyword id="KW-1161">Viral attachment to host cell</keyword>
<keyword id="KW-1227">Viral tail protein</keyword>
<keyword id="KW-0946">Virion</keyword>
<keyword id="KW-1160">Virus entry into host cell</keyword>